<geneLocation type="mitochondrion"/>
<organism>
    <name type="scientific">Podospora anserina (strain S / ATCC MYA-4624 / DSM 980 / FGSC 10383)</name>
    <name type="common">Pleurage anserina</name>
    <dbReference type="NCBI Taxonomy" id="515849"/>
    <lineage>
        <taxon>Eukaryota</taxon>
        <taxon>Fungi</taxon>
        <taxon>Dikarya</taxon>
        <taxon>Ascomycota</taxon>
        <taxon>Pezizomycotina</taxon>
        <taxon>Sordariomycetes</taxon>
        <taxon>Sordariomycetidae</taxon>
        <taxon>Sordariales</taxon>
        <taxon>Podosporaceae</taxon>
        <taxon>Podospora</taxon>
        <taxon>Podospora anserina</taxon>
    </lineage>
</organism>
<evidence type="ECO:0000250" key="1"/>
<evidence type="ECO:0000255" key="2"/>
<evidence type="ECO:0000305" key="3"/>
<accession>P20679</accession>
<keyword id="KW-0249">Electron transport</keyword>
<keyword id="KW-0472">Membrane</keyword>
<keyword id="KW-0496">Mitochondrion</keyword>
<keyword id="KW-0999">Mitochondrion inner membrane</keyword>
<keyword id="KW-0520">NAD</keyword>
<keyword id="KW-1185">Reference proteome</keyword>
<keyword id="KW-0679">Respiratory chain</keyword>
<keyword id="KW-1278">Translocase</keyword>
<keyword id="KW-0812">Transmembrane</keyword>
<keyword id="KW-1133">Transmembrane helix</keyword>
<keyword id="KW-0813">Transport</keyword>
<keyword id="KW-0830">Ubiquinone</keyword>
<feature type="chain" id="PRO_0000118136" description="NADH-ubiquinone oxidoreductase chain 5">
    <location>
        <begin position="1"/>
        <end position="652"/>
    </location>
</feature>
<feature type="transmembrane region" description="Helical" evidence="2">
    <location>
        <begin position="1"/>
        <end position="21"/>
    </location>
</feature>
<feature type="transmembrane region" description="Helical" evidence="2">
    <location>
        <begin position="30"/>
        <end position="50"/>
    </location>
</feature>
<feature type="transmembrane region" description="Helical" evidence="2">
    <location>
        <begin position="72"/>
        <end position="92"/>
    </location>
</feature>
<feature type="transmembrane region" description="Helical" evidence="2">
    <location>
        <begin position="119"/>
        <end position="139"/>
    </location>
</feature>
<feature type="transmembrane region" description="Helical" evidence="2">
    <location>
        <begin position="140"/>
        <end position="160"/>
    </location>
</feature>
<feature type="transmembrane region" description="Helical" evidence="2">
    <location>
        <begin position="177"/>
        <end position="197"/>
    </location>
</feature>
<feature type="transmembrane region" description="Helical" evidence="2">
    <location>
        <begin position="200"/>
        <end position="220"/>
    </location>
</feature>
<feature type="transmembrane region" description="Helical" evidence="2">
    <location>
        <begin position="241"/>
        <end position="261"/>
    </location>
</feature>
<feature type="transmembrane region" description="Helical" evidence="2">
    <location>
        <begin position="274"/>
        <end position="294"/>
    </location>
</feature>
<feature type="transmembrane region" description="Helical" evidence="2">
    <location>
        <begin position="301"/>
        <end position="319"/>
    </location>
</feature>
<feature type="transmembrane region" description="Helical" evidence="2">
    <location>
        <begin position="331"/>
        <end position="351"/>
    </location>
</feature>
<feature type="transmembrane region" description="Helical" evidence="2">
    <location>
        <begin position="365"/>
        <end position="385"/>
    </location>
</feature>
<feature type="transmembrane region" description="Helical" evidence="2">
    <location>
        <begin position="403"/>
        <end position="423"/>
    </location>
</feature>
<feature type="transmembrane region" description="Helical" evidence="2">
    <location>
        <begin position="454"/>
        <end position="474"/>
    </location>
</feature>
<feature type="transmembrane region" description="Helical" evidence="2">
    <location>
        <begin position="505"/>
        <end position="525"/>
    </location>
</feature>
<feature type="transmembrane region" description="Helical" evidence="2">
    <location>
        <begin position="619"/>
        <end position="639"/>
    </location>
</feature>
<protein>
    <recommendedName>
        <fullName>NADH-ubiquinone oxidoreductase chain 5</fullName>
        <ecNumber>7.1.1.2</ecNumber>
    </recommendedName>
    <alternativeName>
        <fullName>NADH dehydrogenase subunit 5</fullName>
    </alternativeName>
</protein>
<gene>
    <name type="primary">ND5</name>
</gene>
<proteinExistence type="inferred from homology"/>
<dbReference type="EC" id="7.1.1.2"/>
<dbReference type="EMBL" id="X55026">
    <property type="protein sequence ID" value="CAA38798.1"/>
    <property type="molecule type" value="Genomic_DNA"/>
</dbReference>
<dbReference type="PIR" id="S09133">
    <property type="entry name" value="S09133"/>
</dbReference>
<dbReference type="SMR" id="P20679"/>
<dbReference type="STRING" id="515849.P20679"/>
<dbReference type="KEGG" id="pan:PoanfMp36"/>
<dbReference type="InParanoid" id="P20679"/>
<dbReference type="Proteomes" id="UP000001197">
    <property type="component" value="Mitochondrion"/>
</dbReference>
<dbReference type="GO" id="GO:0005743">
    <property type="term" value="C:mitochondrial inner membrane"/>
    <property type="evidence" value="ECO:0007669"/>
    <property type="project" value="UniProtKB-SubCell"/>
</dbReference>
<dbReference type="GO" id="GO:0008137">
    <property type="term" value="F:NADH dehydrogenase (ubiquinone) activity"/>
    <property type="evidence" value="ECO:0007669"/>
    <property type="project" value="UniProtKB-EC"/>
</dbReference>
<dbReference type="GO" id="GO:0042773">
    <property type="term" value="P:ATP synthesis coupled electron transport"/>
    <property type="evidence" value="ECO:0007669"/>
    <property type="project" value="InterPro"/>
</dbReference>
<dbReference type="GO" id="GO:0015990">
    <property type="term" value="P:electron transport coupled proton transport"/>
    <property type="evidence" value="ECO:0007669"/>
    <property type="project" value="TreeGrafter"/>
</dbReference>
<dbReference type="InterPro" id="IPR010934">
    <property type="entry name" value="NADH_DH_su5_C"/>
</dbReference>
<dbReference type="InterPro" id="IPR018393">
    <property type="entry name" value="NADHpl_OxRdtase_5_subgr"/>
</dbReference>
<dbReference type="InterPro" id="IPR001750">
    <property type="entry name" value="ND/Mrp_TM"/>
</dbReference>
<dbReference type="InterPro" id="IPR003945">
    <property type="entry name" value="NU5C-like"/>
</dbReference>
<dbReference type="InterPro" id="IPR001516">
    <property type="entry name" value="Proton_antipo_N"/>
</dbReference>
<dbReference type="NCBIfam" id="TIGR01974">
    <property type="entry name" value="NDH_I_L"/>
    <property type="match status" value="1"/>
</dbReference>
<dbReference type="NCBIfam" id="NF005141">
    <property type="entry name" value="PRK06590.1"/>
    <property type="match status" value="1"/>
</dbReference>
<dbReference type="PANTHER" id="PTHR42829">
    <property type="entry name" value="NADH-UBIQUINONE OXIDOREDUCTASE CHAIN 5"/>
    <property type="match status" value="1"/>
</dbReference>
<dbReference type="PANTHER" id="PTHR42829:SF2">
    <property type="entry name" value="NADH-UBIQUINONE OXIDOREDUCTASE CHAIN 5"/>
    <property type="match status" value="1"/>
</dbReference>
<dbReference type="Pfam" id="PF06455">
    <property type="entry name" value="NADH5_C"/>
    <property type="match status" value="1"/>
</dbReference>
<dbReference type="Pfam" id="PF00361">
    <property type="entry name" value="Proton_antipo_M"/>
    <property type="match status" value="1"/>
</dbReference>
<dbReference type="Pfam" id="PF00662">
    <property type="entry name" value="Proton_antipo_N"/>
    <property type="match status" value="1"/>
</dbReference>
<dbReference type="PRINTS" id="PR01434">
    <property type="entry name" value="NADHDHGNASE5"/>
</dbReference>
<name>NU5M_PODAN</name>
<comment type="function">
    <text evidence="1">Core subunit of the mitochondrial membrane respiratory chain NADH dehydrogenase (Complex I) that is believed to belong to the minimal assembly required for catalysis. Complex I functions in the transfer of electrons from NADH to the respiratory chain. The immediate electron acceptor for the enzyme is believed to be ubiquinone (By similarity).</text>
</comment>
<comment type="catalytic activity">
    <reaction>
        <text>a ubiquinone + NADH + 5 H(+)(in) = a ubiquinol + NAD(+) + 4 H(+)(out)</text>
        <dbReference type="Rhea" id="RHEA:29091"/>
        <dbReference type="Rhea" id="RHEA-COMP:9565"/>
        <dbReference type="Rhea" id="RHEA-COMP:9566"/>
        <dbReference type="ChEBI" id="CHEBI:15378"/>
        <dbReference type="ChEBI" id="CHEBI:16389"/>
        <dbReference type="ChEBI" id="CHEBI:17976"/>
        <dbReference type="ChEBI" id="CHEBI:57540"/>
        <dbReference type="ChEBI" id="CHEBI:57945"/>
        <dbReference type="EC" id="7.1.1.2"/>
    </reaction>
</comment>
<comment type="subcellular location">
    <subcellularLocation>
        <location evidence="1">Mitochondrion inner membrane</location>
        <topology evidence="1">Multi-pass membrane protein</topology>
    </subcellularLocation>
</comment>
<comment type="similarity">
    <text evidence="3">Belongs to the complex I subunit 5 family.</text>
</comment>
<sequence length="652" mass="72633">MYLSIIILPLLGCIVSGFLGRKVGVKGAQLITCSNVVITTILSILAFIEVGFNNIPVTINLFRWIDSEWFNIIWGFQFDSLTVSMLIPVLIISSLVHIYSISYMSSDPHNQRFFSYLSLFTFMMIILVTANNYLLMFVGWEGVGVCSYLLVSFWFTRIAANQSSISAFLANRVGDCFLTIGMFAILWSLGNLDYSTVFSLAPYINSKVVLIIGICLLIGAMAKSSQVGLHVWLPMAMEGPTPVSALIHAATMVTAGVYLLMRSSPLIEYNSTVLLLCLWLGAITTVFSSLIGLFQQDIKKVIAYSTMSQLGMMVIAIGLSSYNVALFHLINHAFYKALLFLGAGSVIHAVADNQDFRKYGGLINFLPLTYSVMLIASLSLVAFPFMTGFYSKDFILESAYGQFSFSGVAVYIIATIGAIFTTLYSVKVLYLTFLSNPNGTRAYYNYKPALEGDLFLTLPLIILAIFSIFFGFITKDIFIGLGSNFFGDNSLFIHPTHEIMIDTEFAVPVLFKLLPFIFTISFSIIALTISEFLSELVIYFKLSRLGYNIFGFFNQRFLIELFYNKYITNLILDLGGQMTKILDKGSIELFGPFGLEKGLVNFSKNISSLSTSHVTTYALYILVAFILYLLYNYLSFNFLPFLIAGLTILTTI</sequence>
<reference key="1">
    <citation type="journal article" date="1990" name="J. Mol. Biol.">
        <title>DNA sequence analysis of the mitochondrial ND4L-ND5 gene complex from Podospora anserina. Duplication of the ND4L gene within its intron.</title>
        <authorList>
            <person name="Cummings D.J."/>
            <person name="Michel F."/>
            <person name="Domenico J.M."/>
            <person name="McNally K.L."/>
        </authorList>
    </citation>
    <scope>NUCLEOTIDE SEQUENCE [GENOMIC DNA]</scope>
    <source>
        <strain>A</strain>
        <strain>s</strain>
    </source>
</reference>
<reference key="2">
    <citation type="journal article" date="1990" name="Curr. Genet.">
        <title>The complete DNA sequence of the mitochondrial genome of Podospora anserina.</title>
        <authorList>
            <person name="Cummings D.J."/>
            <person name="McNally K.L."/>
            <person name="Domenico J.M."/>
            <person name="Matsuura E.T."/>
        </authorList>
    </citation>
    <scope>NUCLEOTIDE SEQUENCE [LARGE SCALE GENOMIC DNA]</scope>
    <source>
        <strain>s</strain>
    </source>
</reference>